<comment type="function">
    <text evidence="1">Required for accurate and efficient protein synthesis under certain stress conditions. May act as a fidelity factor of the translation reaction, by catalyzing a one-codon backward translocation of tRNAs on improperly translocated ribosomes. Back-translocation proceeds from a post-translocation (POST) complex to a pre-translocation (PRE) complex, thus giving elongation factor G a second chance to translocate the tRNAs correctly. Binds to ribosomes in a GTP-dependent manner.</text>
</comment>
<comment type="catalytic activity">
    <reaction evidence="1">
        <text>GTP + H2O = GDP + phosphate + H(+)</text>
        <dbReference type="Rhea" id="RHEA:19669"/>
        <dbReference type="ChEBI" id="CHEBI:15377"/>
        <dbReference type="ChEBI" id="CHEBI:15378"/>
        <dbReference type="ChEBI" id="CHEBI:37565"/>
        <dbReference type="ChEBI" id="CHEBI:43474"/>
        <dbReference type="ChEBI" id="CHEBI:58189"/>
        <dbReference type="EC" id="3.6.5.n1"/>
    </reaction>
</comment>
<comment type="subcellular location">
    <subcellularLocation>
        <location evidence="1">Cell inner membrane</location>
        <topology evidence="1">Peripheral membrane protein</topology>
        <orientation evidence="1">Cytoplasmic side</orientation>
    </subcellularLocation>
</comment>
<comment type="similarity">
    <text evidence="1">Belongs to the TRAFAC class translation factor GTPase superfamily. Classic translation factor GTPase family. LepA subfamily.</text>
</comment>
<gene>
    <name evidence="1" type="primary">lepA</name>
    <name type="ordered locus">ECED1_2999</name>
</gene>
<organism>
    <name type="scientific">Escherichia coli O81 (strain ED1a)</name>
    <dbReference type="NCBI Taxonomy" id="585397"/>
    <lineage>
        <taxon>Bacteria</taxon>
        <taxon>Pseudomonadati</taxon>
        <taxon>Pseudomonadota</taxon>
        <taxon>Gammaproteobacteria</taxon>
        <taxon>Enterobacterales</taxon>
        <taxon>Enterobacteriaceae</taxon>
        <taxon>Escherichia</taxon>
    </lineage>
</organism>
<proteinExistence type="inferred from homology"/>
<dbReference type="EC" id="3.6.5.n1" evidence="1"/>
<dbReference type="EMBL" id="CU928162">
    <property type="protein sequence ID" value="CAR09167.2"/>
    <property type="molecule type" value="Genomic_DNA"/>
</dbReference>
<dbReference type="RefSeq" id="WP_000790169.1">
    <property type="nucleotide sequence ID" value="NC_011745.1"/>
</dbReference>
<dbReference type="SMR" id="B7MYK1"/>
<dbReference type="KEGG" id="ecq:ECED1_2999"/>
<dbReference type="HOGENOM" id="CLU_009995_3_3_6"/>
<dbReference type="Proteomes" id="UP000000748">
    <property type="component" value="Chromosome"/>
</dbReference>
<dbReference type="GO" id="GO:0005886">
    <property type="term" value="C:plasma membrane"/>
    <property type="evidence" value="ECO:0007669"/>
    <property type="project" value="UniProtKB-SubCell"/>
</dbReference>
<dbReference type="GO" id="GO:0005525">
    <property type="term" value="F:GTP binding"/>
    <property type="evidence" value="ECO:0007669"/>
    <property type="project" value="UniProtKB-UniRule"/>
</dbReference>
<dbReference type="GO" id="GO:0003924">
    <property type="term" value="F:GTPase activity"/>
    <property type="evidence" value="ECO:0007669"/>
    <property type="project" value="UniProtKB-UniRule"/>
</dbReference>
<dbReference type="GO" id="GO:0097216">
    <property type="term" value="F:guanosine tetraphosphate binding"/>
    <property type="evidence" value="ECO:0007669"/>
    <property type="project" value="UniProtKB-ARBA"/>
</dbReference>
<dbReference type="GO" id="GO:0043022">
    <property type="term" value="F:ribosome binding"/>
    <property type="evidence" value="ECO:0007669"/>
    <property type="project" value="UniProtKB-UniRule"/>
</dbReference>
<dbReference type="GO" id="GO:0003746">
    <property type="term" value="F:translation elongation factor activity"/>
    <property type="evidence" value="ECO:0007669"/>
    <property type="project" value="UniProtKB-UniRule"/>
</dbReference>
<dbReference type="GO" id="GO:0045727">
    <property type="term" value="P:positive regulation of translation"/>
    <property type="evidence" value="ECO:0007669"/>
    <property type="project" value="UniProtKB-UniRule"/>
</dbReference>
<dbReference type="CDD" id="cd03699">
    <property type="entry name" value="EF4_II"/>
    <property type="match status" value="1"/>
</dbReference>
<dbReference type="CDD" id="cd16260">
    <property type="entry name" value="EF4_III"/>
    <property type="match status" value="1"/>
</dbReference>
<dbReference type="CDD" id="cd01890">
    <property type="entry name" value="LepA"/>
    <property type="match status" value="1"/>
</dbReference>
<dbReference type="CDD" id="cd03709">
    <property type="entry name" value="lepA_C"/>
    <property type="match status" value="1"/>
</dbReference>
<dbReference type="FunFam" id="3.30.70.240:FF:000005">
    <property type="entry name" value="Elongation factor 4"/>
    <property type="match status" value="1"/>
</dbReference>
<dbReference type="FunFam" id="3.40.50.300:FF:000078">
    <property type="entry name" value="Elongation factor 4"/>
    <property type="match status" value="1"/>
</dbReference>
<dbReference type="FunFam" id="2.40.30.10:FF:000015">
    <property type="entry name" value="Translation factor GUF1, mitochondrial"/>
    <property type="match status" value="1"/>
</dbReference>
<dbReference type="FunFam" id="3.30.70.2570:FF:000001">
    <property type="entry name" value="Translation factor GUF1, mitochondrial"/>
    <property type="match status" value="1"/>
</dbReference>
<dbReference type="FunFam" id="3.30.70.870:FF:000004">
    <property type="entry name" value="Translation factor GUF1, mitochondrial"/>
    <property type="match status" value="1"/>
</dbReference>
<dbReference type="Gene3D" id="3.30.70.240">
    <property type="match status" value="1"/>
</dbReference>
<dbReference type="Gene3D" id="3.30.70.2570">
    <property type="entry name" value="Elongation factor 4, C-terminal domain"/>
    <property type="match status" value="1"/>
</dbReference>
<dbReference type="Gene3D" id="3.30.70.870">
    <property type="entry name" value="Elongation Factor G (Translational Gtpase), domain 3"/>
    <property type="match status" value="1"/>
</dbReference>
<dbReference type="Gene3D" id="3.40.50.300">
    <property type="entry name" value="P-loop containing nucleotide triphosphate hydrolases"/>
    <property type="match status" value="1"/>
</dbReference>
<dbReference type="Gene3D" id="2.40.30.10">
    <property type="entry name" value="Translation factors"/>
    <property type="match status" value="1"/>
</dbReference>
<dbReference type="HAMAP" id="MF_00071">
    <property type="entry name" value="LepA"/>
    <property type="match status" value="1"/>
</dbReference>
<dbReference type="InterPro" id="IPR006297">
    <property type="entry name" value="EF-4"/>
</dbReference>
<dbReference type="InterPro" id="IPR035647">
    <property type="entry name" value="EFG_III/V"/>
</dbReference>
<dbReference type="InterPro" id="IPR000640">
    <property type="entry name" value="EFG_V-like"/>
</dbReference>
<dbReference type="InterPro" id="IPR004161">
    <property type="entry name" value="EFTu-like_2"/>
</dbReference>
<dbReference type="InterPro" id="IPR031157">
    <property type="entry name" value="G_TR_CS"/>
</dbReference>
<dbReference type="InterPro" id="IPR038363">
    <property type="entry name" value="LepA_C_sf"/>
</dbReference>
<dbReference type="InterPro" id="IPR013842">
    <property type="entry name" value="LepA_CTD"/>
</dbReference>
<dbReference type="InterPro" id="IPR035654">
    <property type="entry name" value="LepA_IV"/>
</dbReference>
<dbReference type="InterPro" id="IPR027417">
    <property type="entry name" value="P-loop_NTPase"/>
</dbReference>
<dbReference type="InterPro" id="IPR005225">
    <property type="entry name" value="Small_GTP-bd"/>
</dbReference>
<dbReference type="InterPro" id="IPR000795">
    <property type="entry name" value="T_Tr_GTP-bd_dom"/>
</dbReference>
<dbReference type="NCBIfam" id="TIGR01393">
    <property type="entry name" value="lepA"/>
    <property type="match status" value="1"/>
</dbReference>
<dbReference type="NCBIfam" id="TIGR00231">
    <property type="entry name" value="small_GTP"/>
    <property type="match status" value="1"/>
</dbReference>
<dbReference type="PANTHER" id="PTHR43512:SF4">
    <property type="entry name" value="TRANSLATION FACTOR GUF1 HOMOLOG, CHLOROPLASTIC"/>
    <property type="match status" value="1"/>
</dbReference>
<dbReference type="PANTHER" id="PTHR43512">
    <property type="entry name" value="TRANSLATION FACTOR GUF1-RELATED"/>
    <property type="match status" value="1"/>
</dbReference>
<dbReference type="Pfam" id="PF00679">
    <property type="entry name" value="EFG_C"/>
    <property type="match status" value="1"/>
</dbReference>
<dbReference type="Pfam" id="PF00009">
    <property type="entry name" value="GTP_EFTU"/>
    <property type="match status" value="1"/>
</dbReference>
<dbReference type="Pfam" id="PF03144">
    <property type="entry name" value="GTP_EFTU_D2"/>
    <property type="match status" value="1"/>
</dbReference>
<dbReference type="Pfam" id="PF06421">
    <property type="entry name" value="LepA_C"/>
    <property type="match status" value="1"/>
</dbReference>
<dbReference type="PRINTS" id="PR00315">
    <property type="entry name" value="ELONGATNFCT"/>
</dbReference>
<dbReference type="SUPFAM" id="SSF54980">
    <property type="entry name" value="EF-G C-terminal domain-like"/>
    <property type="match status" value="2"/>
</dbReference>
<dbReference type="SUPFAM" id="SSF52540">
    <property type="entry name" value="P-loop containing nucleoside triphosphate hydrolases"/>
    <property type="match status" value="1"/>
</dbReference>
<dbReference type="PROSITE" id="PS00301">
    <property type="entry name" value="G_TR_1"/>
    <property type="match status" value="1"/>
</dbReference>
<dbReference type="PROSITE" id="PS51722">
    <property type="entry name" value="G_TR_2"/>
    <property type="match status" value="1"/>
</dbReference>
<sequence length="599" mass="66512">MKNIRNFSIIAHIDHGKSTLSDRIIQICGGLSDREMEAQVLDSMDLERERGITIKAQSVTLDYKASDGETYQLNFIDTPGHVDFSYEVSRSLAACEGALLVVDAGQGVEAQTLANCYTAMEMDLEVVPVLNKIDLPAADPERVAEEIEDIVGIDATDAVRCSAKTGVGVQDVLERLVRDIPPPEGDPEGPLQALIIDSWFDNYLGVVSLIRIKNGTLRKGDKVKVMSTGQTYNADRLGIFTPKQVDRTELKCGEVGWLVCAIKDIHGAPVGDTLTLARNPAEKALPGFKKVKPQVYAGLFPVSSDDYEAFRDALGKLSLNDASLFYEPESSSALGFGFRCGFLGLLHMEIIQERLEREYDLDLITTAPTVVYEVETTSREVIYVDSPSKLPAVNNIYELREPIAECHMLLPQAYLGNVITLCVEKRGVQTNMVYHGNQVALTYEIPMAEVVLDFFDRLKSTSRGYASLDYNFKRFQASDMVRVDVLINGERVDALALITHRGNSQNRGRELVEKMKDLIPRQQFDIAIQAAIGTHIIARSTVKQLRKNVLAKCYGGDISRKKKLLQKQKEGKKRMKQIGNVELPQEAFLAILHVGKDNK</sequence>
<name>LEPA_ECO81</name>
<evidence type="ECO:0000255" key="1">
    <source>
        <dbReference type="HAMAP-Rule" id="MF_00071"/>
    </source>
</evidence>
<keyword id="KW-0997">Cell inner membrane</keyword>
<keyword id="KW-1003">Cell membrane</keyword>
<keyword id="KW-0342">GTP-binding</keyword>
<keyword id="KW-0378">Hydrolase</keyword>
<keyword id="KW-0472">Membrane</keyword>
<keyword id="KW-0547">Nucleotide-binding</keyword>
<keyword id="KW-0648">Protein biosynthesis</keyword>
<feature type="chain" id="PRO_1000190812" description="Elongation factor 4">
    <location>
        <begin position="1"/>
        <end position="599"/>
    </location>
</feature>
<feature type="domain" description="tr-type G">
    <location>
        <begin position="2"/>
        <end position="184"/>
    </location>
</feature>
<feature type="binding site" evidence="1">
    <location>
        <begin position="14"/>
        <end position="19"/>
    </location>
    <ligand>
        <name>GTP</name>
        <dbReference type="ChEBI" id="CHEBI:37565"/>
    </ligand>
</feature>
<feature type="binding site" evidence="1">
    <location>
        <begin position="131"/>
        <end position="134"/>
    </location>
    <ligand>
        <name>GTP</name>
        <dbReference type="ChEBI" id="CHEBI:37565"/>
    </ligand>
</feature>
<reference key="1">
    <citation type="journal article" date="2009" name="PLoS Genet.">
        <title>Organised genome dynamics in the Escherichia coli species results in highly diverse adaptive paths.</title>
        <authorList>
            <person name="Touchon M."/>
            <person name="Hoede C."/>
            <person name="Tenaillon O."/>
            <person name="Barbe V."/>
            <person name="Baeriswyl S."/>
            <person name="Bidet P."/>
            <person name="Bingen E."/>
            <person name="Bonacorsi S."/>
            <person name="Bouchier C."/>
            <person name="Bouvet O."/>
            <person name="Calteau A."/>
            <person name="Chiapello H."/>
            <person name="Clermont O."/>
            <person name="Cruveiller S."/>
            <person name="Danchin A."/>
            <person name="Diard M."/>
            <person name="Dossat C."/>
            <person name="Karoui M.E."/>
            <person name="Frapy E."/>
            <person name="Garry L."/>
            <person name="Ghigo J.M."/>
            <person name="Gilles A.M."/>
            <person name="Johnson J."/>
            <person name="Le Bouguenec C."/>
            <person name="Lescat M."/>
            <person name="Mangenot S."/>
            <person name="Martinez-Jehanne V."/>
            <person name="Matic I."/>
            <person name="Nassif X."/>
            <person name="Oztas S."/>
            <person name="Petit M.A."/>
            <person name="Pichon C."/>
            <person name="Rouy Z."/>
            <person name="Ruf C.S."/>
            <person name="Schneider D."/>
            <person name="Tourret J."/>
            <person name="Vacherie B."/>
            <person name="Vallenet D."/>
            <person name="Medigue C."/>
            <person name="Rocha E.P.C."/>
            <person name="Denamur E."/>
        </authorList>
    </citation>
    <scope>NUCLEOTIDE SEQUENCE [LARGE SCALE GENOMIC DNA]</scope>
    <source>
        <strain>ED1a</strain>
    </source>
</reference>
<protein>
    <recommendedName>
        <fullName evidence="1">Elongation factor 4</fullName>
        <shortName evidence="1">EF-4</shortName>
        <ecNumber evidence="1">3.6.5.n1</ecNumber>
    </recommendedName>
    <alternativeName>
        <fullName evidence="1">Ribosomal back-translocase LepA</fullName>
    </alternativeName>
</protein>
<accession>B7MYK1</accession>